<feature type="chain" id="PRO_0000450176" description="Glutamine amidotransferase-like protein chry6">
    <location>
        <begin position="1"/>
        <end position="240"/>
    </location>
</feature>
<feature type="domain" description="Glutamine amidotransferase type-1" evidence="1">
    <location>
        <begin position="13"/>
        <end position="205"/>
    </location>
</feature>
<feature type="active site" description="Nucleophile" evidence="1">
    <location>
        <position position="102"/>
    </location>
</feature>
<feature type="active site" evidence="1">
    <location>
        <position position="185"/>
    </location>
</feature>
<feature type="active site" evidence="1">
    <location>
        <position position="187"/>
    </location>
</feature>
<reference key="1">
    <citation type="journal article" date="2007" name="Science">
        <title>The Fusarium graminearum genome reveals a link between localized polymorphism and pathogen specialization.</title>
        <authorList>
            <person name="Cuomo C.A."/>
            <person name="Gueldener U."/>
            <person name="Xu J.-R."/>
            <person name="Trail F."/>
            <person name="Turgeon B.G."/>
            <person name="Di Pietro A."/>
            <person name="Walton J.D."/>
            <person name="Ma L.-J."/>
            <person name="Baker S.E."/>
            <person name="Rep M."/>
            <person name="Adam G."/>
            <person name="Antoniw J."/>
            <person name="Baldwin T."/>
            <person name="Calvo S.E."/>
            <person name="Chang Y.-L."/>
            <person name="DeCaprio D."/>
            <person name="Gale L.R."/>
            <person name="Gnerre S."/>
            <person name="Goswami R.S."/>
            <person name="Hammond-Kosack K."/>
            <person name="Harris L.J."/>
            <person name="Hilburn K."/>
            <person name="Kennell J.C."/>
            <person name="Kroken S."/>
            <person name="Magnuson J.K."/>
            <person name="Mannhaupt G."/>
            <person name="Mauceli E.W."/>
            <person name="Mewes H.-W."/>
            <person name="Mitterbauer R."/>
            <person name="Muehlbauer G."/>
            <person name="Muensterkoetter M."/>
            <person name="Nelson D."/>
            <person name="O'Donnell K."/>
            <person name="Ouellet T."/>
            <person name="Qi W."/>
            <person name="Quesneville H."/>
            <person name="Roncero M.I.G."/>
            <person name="Seong K.-Y."/>
            <person name="Tetko I.V."/>
            <person name="Urban M."/>
            <person name="Waalwijk C."/>
            <person name="Ward T.J."/>
            <person name="Yao J."/>
            <person name="Birren B.W."/>
            <person name="Kistler H.C."/>
        </authorList>
    </citation>
    <scope>NUCLEOTIDE SEQUENCE [LARGE SCALE GENOMIC DNA]</scope>
    <source>
        <strain>ATCC MYA-4620 / CBS 123657 / FGSC 9075 / NRRL 31084 / PH-1</strain>
    </source>
</reference>
<reference key="2">
    <citation type="journal article" date="2010" name="Nature">
        <title>Comparative genomics reveals mobile pathogenicity chromosomes in Fusarium.</title>
        <authorList>
            <person name="Ma L.-J."/>
            <person name="van der Does H.C."/>
            <person name="Borkovich K.A."/>
            <person name="Coleman J.J."/>
            <person name="Daboussi M.-J."/>
            <person name="Di Pietro A."/>
            <person name="Dufresne M."/>
            <person name="Freitag M."/>
            <person name="Grabherr M."/>
            <person name="Henrissat B."/>
            <person name="Houterman P.M."/>
            <person name="Kang S."/>
            <person name="Shim W.-B."/>
            <person name="Woloshuk C."/>
            <person name="Xie X."/>
            <person name="Xu J.-R."/>
            <person name="Antoniw J."/>
            <person name="Baker S.E."/>
            <person name="Bluhm B.H."/>
            <person name="Breakspear A."/>
            <person name="Brown D.W."/>
            <person name="Butchko R.A.E."/>
            <person name="Chapman S."/>
            <person name="Coulson R."/>
            <person name="Coutinho P.M."/>
            <person name="Danchin E.G.J."/>
            <person name="Diener A."/>
            <person name="Gale L.R."/>
            <person name="Gardiner D.M."/>
            <person name="Goff S."/>
            <person name="Hammond-Kosack K.E."/>
            <person name="Hilburn K."/>
            <person name="Hua-Van A."/>
            <person name="Jonkers W."/>
            <person name="Kazan K."/>
            <person name="Kodira C.D."/>
            <person name="Koehrsen M."/>
            <person name="Kumar L."/>
            <person name="Lee Y.-H."/>
            <person name="Li L."/>
            <person name="Manners J.M."/>
            <person name="Miranda-Saavedra D."/>
            <person name="Mukherjee M."/>
            <person name="Park G."/>
            <person name="Park J."/>
            <person name="Park S.-Y."/>
            <person name="Proctor R.H."/>
            <person name="Regev A."/>
            <person name="Ruiz-Roldan M.C."/>
            <person name="Sain D."/>
            <person name="Sakthikumar S."/>
            <person name="Sykes S."/>
            <person name="Schwartz D.C."/>
            <person name="Turgeon B.G."/>
            <person name="Wapinski I."/>
            <person name="Yoder O."/>
            <person name="Young S."/>
            <person name="Zeng Q."/>
            <person name="Zhou S."/>
            <person name="Galagan J."/>
            <person name="Cuomo C.A."/>
            <person name="Kistler H.C."/>
            <person name="Rep M."/>
        </authorList>
    </citation>
    <scope>GENOME REANNOTATION</scope>
    <source>
        <strain>ATCC MYA-4620 / CBS 123657 / FGSC 9075 / NRRL 31084 / PH-1</strain>
    </source>
</reference>
<reference key="3">
    <citation type="journal article" date="2015" name="BMC Genomics">
        <title>The completed genome sequence of the pathogenic ascomycete fungus Fusarium graminearum.</title>
        <authorList>
            <person name="King R."/>
            <person name="Urban M."/>
            <person name="Hammond-Kosack M.C.U."/>
            <person name="Hassani-Pak K."/>
            <person name="Hammond-Kosack K.E."/>
        </authorList>
    </citation>
    <scope>NUCLEOTIDE SEQUENCE [LARGE SCALE GENOMIC DNA]</scope>
    <source>
        <strain>ATCC MYA-4620 / CBS 123657 / FGSC 9075 / NRRL 31084 / PH-1</strain>
    </source>
</reference>
<reference key="4">
    <citation type="journal article" date="2017" name="J. Nat. Prod.">
        <title>Chrysogine biosynthesis is mediated by a two-module nonribosomal peptide synthetase.</title>
        <authorList>
            <person name="Wollenberg R.D."/>
            <person name="Saei W."/>
            <person name="Westphal K.R."/>
            <person name="Klitgaard C.S."/>
            <person name="Nielsen K.L."/>
            <person name="Lysoee E."/>
            <person name="Gardiner D.M."/>
            <person name="Wimmer R."/>
            <person name="Sondergaard T.E."/>
            <person name="Soerensen J.L."/>
        </authorList>
    </citation>
    <scope>FUNCTION</scope>
    <scope>PATHWAY</scope>
</reference>
<dbReference type="EC" id="3.-.-.-" evidence="5"/>
<dbReference type="EMBL" id="HG970334">
    <property type="protein sequence ID" value="CEF87652.1"/>
    <property type="molecule type" value="Genomic_DNA"/>
</dbReference>
<dbReference type="RefSeq" id="XP_011325839.1">
    <property type="nucleotide sequence ID" value="XM_011327537.1"/>
</dbReference>
<dbReference type="SMR" id="I1S3K6"/>
<dbReference type="STRING" id="229533.I1S3K6"/>
<dbReference type="KEGG" id="fgr:FGSG_11394"/>
<dbReference type="VEuPathDB" id="FungiDB:FGRAMPH1_01G21957"/>
<dbReference type="eggNOG" id="KOG3179">
    <property type="taxonomic scope" value="Eukaryota"/>
</dbReference>
<dbReference type="HOGENOM" id="CLU_054974_0_0_1"/>
<dbReference type="InParanoid" id="I1S3K6"/>
<dbReference type="OrthoDB" id="58253at110618"/>
<dbReference type="Proteomes" id="UP000070720">
    <property type="component" value="Chromosome 3"/>
</dbReference>
<dbReference type="GO" id="GO:0005829">
    <property type="term" value="C:cytosol"/>
    <property type="evidence" value="ECO:0007669"/>
    <property type="project" value="TreeGrafter"/>
</dbReference>
<dbReference type="GO" id="GO:0005634">
    <property type="term" value="C:nucleus"/>
    <property type="evidence" value="ECO:0007669"/>
    <property type="project" value="TreeGrafter"/>
</dbReference>
<dbReference type="GO" id="GO:0016787">
    <property type="term" value="F:hydrolase activity"/>
    <property type="evidence" value="ECO:0007669"/>
    <property type="project" value="UniProtKB-KW"/>
</dbReference>
<dbReference type="CDD" id="cd01741">
    <property type="entry name" value="GATase1_1"/>
    <property type="match status" value="1"/>
</dbReference>
<dbReference type="Gene3D" id="3.40.50.880">
    <property type="match status" value="1"/>
</dbReference>
<dbReference type="InterPro" id="IPR044992">
    <property type="entry name" value="ChyE-like"/>
</dbReference>
<dbReference type="InterPro" id="IPR029062">
    <property type="entry name" value="Class_I_gatase-like"/>
</dbReference>
<dbReference type="InterPro" id="IPR017926">
    <property type="entry name" value="GATASE"/>
</dbReference>
<dbReference type="PANTHER" id="PTHR42695">
    <property type="entry name" value="GLUTAMINE AMIDOTRANSFERASE YLR126C-RELATED"/>
    <property type="match status" value="1"/>
</dbReference>
<dbReference type="PANTHER" id="PTHR42695:SF5">
    <property type="entry name" value="GLUTAMINE AMIDOTRANSFERASE YLR126C-RELATED"/>
    <property type="match status" value="1"/>
</dbReference>
<dbReference type="Pfam" id="PF00117">
    <property type="entry name" value="GATase"/>
    <property type="match status" value="1"/>
</dbReference>
<dbReference type="SUPFAM" id="SSF52317">
    <property type="entry name" value="Class I glutamine amidotransferase-like"/>
    <property type="match status" value="1"/>
</dbReference>
<dbReference type="PROSITE" id="PS51273">
    <property type="entry name" value="GATASE_TYPE_1"/>
    <property type="match status" value="1"/>
</dbReference>
<sequence>MSSPSFRVAILANFILDDTGGRPMIDKITQLIRQSKPDAEINVYAAIEGDTLPDPETKDLIILTGGPFNLLKDERPKWVVDTLEYLKTVTAGPSKPKILGICWGQQAIALALGGALGKSDKGQIVGIADIPLTPEGTKFFESPSLTIHKNHEILVTDIGPHLLPLALNNEVLMSKDGQVLTFQGHPEMDSVLSRLFVASDNPVLVGAGSDSGLKPIDSPHDGEIIFERIVRWASPETAHS</sequence>
<keyword id="KW-0315">Glutamine amidotransferase</keyword>
<keyword id="KW-0378">Hydrolase</keyword>
<keyword id="KW-1185">Reference proteome</keyword>
<comment type="function">
    <text evidence="2 5">Glutamine amidotransferase-like protein; part of the gene cluster that mediates the biosynthesis of the yellow pigment chrysogine (PubMed:28708398). Pyruvic acid and anthranilic acid are likely substrates for the nonribosomal peptide synthetase chry1/NRPS14, with pyruvic acid adenylated by the first A domain and anthranilic acid by the second (Probable). If pyruvic acid and anthranilic acid are merged and released from chry1/NRPS14 by hydrolysis, a subsequent amidation would lead to 2-pyruvoylaminobenzamide (Probable). This process is probably catalyzed by the amidotransferase chry2 using glutamine as amino donor (Probable). The dehydrogenase chry5 that has a terminal berberine bridge domain for C-N cyclization could catalyze the cyclization of 2-pyruvoylaminobenzamide to yield acetyl-4(3H)-quinazolidinone (Probable). A final reduction of acetyl-4(3H)-quinazolidinone catalyzed by the oxidoreductase chry4 would result in chrysogine (Probable).</text>
</comment>
<comment type="pathway">
    <text evidence="5">Pigment biosynthesis.</text>
</comment>
<comment type="similarity">
    <text evidence="4">Belongs to the peptidase C26 family.</text>
</comment>
<accession>I1S3K6</accession>
<gene>
    <name evidence="3" type="primary">chry6</name>
    <name type="ORF">FG11394</name>
    <name type="ORF">FGRAMPH1_01T21957</name>
</gene>
<protein>
    <recommendedName>
        <fullName evidence="3">Glutamine amidotransferase-like protein chry6</fullName>
        <ecNumber evidence="5">3.-.-.-</ecNumber>
    </recommendedName>
    <alternativeName>
        <fullName evidence="3">Chrysogine biosynthesis cluster protein 6</fullName>
    </alternativeName>
</protein>
<evidence type="ECO:0000255" key="1">
    <source>
        <dbReference type="PROSITE-ProRule" id="PRU00605"/>
    </source>
</evidence>
<evidence type="ECO:0000269" key="2">
    <source>
    </source>
</evidence>
<evidence type="ECO:0000303" key="3">
    <source>
    </source>
</evidence>
<evidence type="ECO:0000305" key="4"/>
<evidence type="ECO:0000305" key="5">
    <source>
    </source>
</evidence>
<name>CHRY6_GIBZE</name>
<organism>
    <name type="scientific">Gibberella zeae (strain ATCC MYA-4620 / CBS 123657 / FGSC 9075 / NRRL 31084 / PH-1)</name>
    <name type="common">Wheat head blight fungus</name>
    <name type="synonym">Fusarium graminearum</name>
    <dbReference type="NCBI Taxonomy" id="229533"/>
    <lineage>
        <taxon>Eukaryota</taxon>
        <taxon>Fungi</taxon>
        <taxon>Dikarya</taxon>
        <taxon>Ascomycota</taxon>
        <taxon>Pezizomycotina</taxon>
        <taxon>Sordariomycetes</taxon>
        <taxon>Hypocreomycetidae</taxon>
        <taxon>Hypocreales</taxon>
        <taxon>Nectriaceae</taxon>
        <taxon>Fusarium</taxon>
    </lineage>
</organism>
<proteinExistence type="inferred from homology"/>